<organism>
    <name type="scientific">Mycobacterium tuberculosis (strain ATCC 25618 / H37Rv)</name>
    <dbReference type="NCBI Taxonomy" id="83332"/>
    <lineage>
        <taxon>Bacteria</taxon>
        <taxon>Bacillati</taxon>
        <taxon>Actinomycetota</taxon>
        <taxon>Actinomycetes</taxon>
        <taxon>Mycobacteriales</taxon>
        <taxon>Mycobacteriaceae</taxon>
        <taxon>Mycobacterium</taxon>
        <taxon>Mycobacterium tuberculosis complex</taxon>
    </lineage>
</organism>
<protein>
    <recommendedName>
        <fullName>WAG22 antigen</fullName>
    </recommendedName>
</protein>
<dbReference type="EMBL" id="AL123456">
    <property type="protein sequence ID" value="CCP44525.1"/>
    <property type="molecule type" value="Genomic_DNA"/>
</dbReference>
<dbReference type="PIR" id="H70987">
    <property type="entry name" value="H70987"/>
</dbReference>
<dbReference type="RefSeq" id="WP_010886128.1">
    <property type="nucleotide sequence ID" value="NZ_KK339370.1"/>
</dbReference>
<dbReference type="RefSeq" id="YP_177831.1">
    <property type="nucleotide sequence ID" value="NC_000962.3"/>
</dbReference>
<dbReference type="STRING" id="83332.Rv1759c"/>
<dbReference type="PaxDb" id="83332-Rv1759c"/>
<dbReference type="GeneID" id="885325"/>
<dbReference type="KEGG" id="mtu:Rv1759c"/>
<dbReference type="KEGG" id="mtv:RVBD_1759c"/>
<dbReference type="PATRIC" id="fig|83332.111.peg.1957"/>
<dbReference type="TubercuList" id="Rv1759c"/>
<dbReference type="eggNOG" id="COG3391">
    <property type="taxonomic scope" value="Bacteria"/>
</dbReference>
<dbReference type="InParanoid" id="P9WIG5"/>
<dbReference type="Proteomes" id="UP000001584">
    <property type="component" value="Chromosome"/>
</dbReference>
<dbReference type="GO" id="GO:0005576">
    <property type="term" value="C:extracellular region"/>
    <property type="evidence" value="ECO:0007005"/>
    <property type="project" value="MTBBASE"/>
</dbReference>
<dbReference type="FunFam" id="1.10.287.850:FF:000001">
    <property type="entry name" value="PE_PGRS39"/>
    <property type="match status" value="1"/>
</dbReference>
<dbReference type="Gene3D" id="1.10.287.850">
    <property type="entry name" value="HP0062-like domain"/>
    <property type="match status" value="1"/>
</dbReference>
<dbReference type="InterPro" id="IPR000084">
    <property type="entry name" value="PE-PGRS_N"/>
</dbReference>
<dbReference type="InterPro" id="IPR048996">
    <property type="entry name" value="PGRS_rpt"/>
</dbReference>
<dbReference type="Pfam" id="PF00934">
    <property type="entry name" value="PE"/>
    <property type="match status" value="1"/>
</dbReference>
<dbReference type="Pfam" id="PF21526">
    <property type="entry name" value="PGRS"/>
    <property type="match status" value="1"/>
</dbReference>
<dbReference type="SUPFAM" id="SSF140459">
    <property type="entry name" value="PE/PPE dimer-like"/>
    <property type="match status" value="1"/>
</dbReference>
<proteinExistence type="inferred from homology"/>
<reference key="1">
    <citation type="journal article" date="1998" name="Nature">
        <title>Deciphering the biology of Mycobacterium tuberculosis from the complete genome sequence.</title>
        <authorList>
            <person name="Cole S.T."/>
            <person name="Brosch R."/>
            <person name="Parkhill J."/>
            <person name="Garnier T."/>
            <person name="Churcher C.M."/>
            <person name="Harris D.E."/>
            <person name="Gordon S.V."/>
            <person name="Eiglmeier K."/>
            <person name="Gas S."/>
            <person name="Barry C.E. III"/>
            <person name="Tekaia F."/>
            <person name="Badcock K."/>
            <person name="Basham D."/>
            <person name="Brown D."/>
            <person name="Chillingworth T."/>
            <person name="Connor R."/>
            <person name="Davies R.M."/>
            <person name="Devlin K."/>
            <person name="Feltwell T."/>
            <person name="Gentles S."/>
            <person name="Hamlin N."/>
            <person name="Holroyd S."/>
            <person name="Hornsby T."/>
            <person name="Jagels K."/>
            <person name="Krogh A."/>
            <person name="McLean J."/>
            <person name="Moule S."/>
            <person name="Murphy L.D."/>
            <person name="Oliver S."/>
            <person name="Osborne J."/>
            <person name="Quail M.A."/>
            <person name="Rajandream M.A."/>
            <person name="Rogers J."/>
            <person name="Rutter S."/>
            <person name="Seeger K."/>
            <person name="Skelton S."/>
            <person name="Squares S."/>
            <person name="Squares R."/>
            <person name="Sulston J.E."/>
            <person name="Taylor K."/>
            <person name="Whitehead S."/>
            <person name="Barrell B.G."/>
        </authorList>
    </citation>
    <scope>NUCLEOTIDE SEQUENCE [LARGE SCALE GENOMIC DNA]</scope>
    <source>
        <strain>ATCC 25618 / H37Rv</strain>
    </source>
</reference>
<gene>
    <name type="primary">wag22</name>
    <name type="synonym">wag22b</name>
    <name type="ordered locus">Rv1759c</name>
    <name type="ORF">MTCY28.25c</name>
</gene>
<comment type="similarity">
    <text evidence="3">Belongs to the mycobacterial PE family. PGRS subfamily.</text>
</comment>
<sequence length="914" mass="74354">MSFVIAVPETIAAAATDLADLGSTIAGANAAAAANTTSLLAAGADEISAAIAALFGAHGRAYQAASAEAAAFHGRFVQALTTGGGAYAAAEAAAVTPLLNSINAPVLAATGRPLIGNGANGAPGTGANGGDAGWLIGNGGAGGSGAKGANGGAGGPGGAAGLFGNGGAGGAGGTATANNGIGGAGGAGGSAMLFGAGGAGGAGGAATSLVGGIGGTGGTGGNAGMLAGAAGAGGAGGFSFSTAGGAGGAGGAGGLFTTGGVGGAGGQGHTGGAGGAGGAGGLFGAGGMGGAGGFGDHGTLGTGGAGGDGGGGGLFGAGGDGGAGGSGLTTGGAAGNGGNAGTLSLGAAGGAGGTGGAGGTVFGGGKGGAGGAGGNAGMLFGSGGGGGTGGFGFAAGGQGGVGGSAGMLSGSGGSGGAGGSGGPAGTAAGGAGGAGGAPGLIGNGGNGGNGGESGGTGGVGGAGGNAVLIGNGGEGGIGALAGKSGFGGFGGLLLGADGYNAPESTSPWHNLQQDILSFINEPTEALTGRPLIGNGDSGTPGTGDDGGAGGWLFGNGGNGGAGAAGTNGSAGGAGGAGGILFGTGGAGGAGGVGTAGAGGAGGAGGSAFLIGSGGTGGVGGAATTTGGVGGAGGNAGLLIGAAGLGGCGGGAFTAGVTTGGAGGTGGAAGLFANGGAGGAGGTGSTAGGAGGAGGAGGLYAHGGTGGPGGNGGSTGAGGTGGAGGPGGLYGAGGSGGAGGHGGMAGGGGGVGGNAGSLTLNASGGAGGSGGSSLSGKAGAGGAGGSAGLFYGSGGAGGNGGYSLNGTGGDGGTGGAGQITGLRSGFGGAGGAGGASDTGAGGNGGAGGKAGLYGNGGDGGAGGDGATSGKGGAGGNAVVIGNGGNGGNAGKAGGTAGAGGAGGLVLGRDGQHGLT</sequence>
<feature type="chain" id="PRO_0000023574" description="WAG22 antigen">
    <location>
        <begin position="1"/>
        <end position="914"/>
    </location>
</feature>
<feature type="domain" description="PE" evidence="1">
    <location>
        <begin position="1"/>
        <end position="93"/>
    </location>
</feature>
<feature type="region of interest" description="Disordered" evidence="2">
    <location>
        <begin position="412"/>
        <end position="431"/>
    </location>
</feature>
<feature type="region of interest" description="Disordered" evidence="2">
    <location>
        <begin position="895"/>
        <end position="914"/>
    </location>
</feature>
<feature type="compositionally biased region" description="Gly residues" evidence="2">
    <location>
        <begin position="895"/>
        <end position="904"/>
    </location>
</feature>
<name>WA22_MYCTU</name>
<keyword id="KW-1185">Reference proteome</keyword>
<keyword id="KW-0677">Repeat</keyword>
<evidence type="ECO:0000255" key="1"/>
<evidence type="ECO:0000256" key="2">
    <source>
        <dbReference type="SAM" id="MobiDB-lite"/>
    </source>
</evidence>
<evidence type="ECO:0000305" key="3"/>
<accession>P9WIG5</accession>
<accession>L0T967</accession>
<accession>O06794</accession>
<accession>P0A686</accession>